<organism>
    <name type="scientific">Tropheryma whipplei (strain TW08/27)</name>
    <name type="common">Whipple's bacillus</name>
    <dbReference type="NCBI Taxonomy" id="218496"/>
    <lineage>
        <taxon>Bacteria</taxon>
        <taxon>Bacillati</taxon>
        <taxon>Actinomycetota</taxon>
        <taxon>Actinomycetes</taxon>
        <taxon>Micrococcales</taxon>
        <taxon>Tropherymataceae</taxon>
        <taxon>Tropheryma</taxon>
    </lineage>
</organism>
<name>FABH_TROW8</name>
<dbReference type="EC" id="2.3.1.180" evidence="1"/>
<dbReference type="EMBL" id="BX251411">
    <property type="protein sequence ID" value="CAD67184.1"/>
    <property type="molecule type" value="Genomic_DNA"/>
</dbReference>
<dbReference type="SMR" id="P64117"/>
<dbReference type="KEGG" id="tws:TW517"/>
<dbReference type="HOGENOM" id="CLU_039592_4_0_11"/>
<dbReference type="UniPathway" id="UPA00094"/>
<dbReference type="GO" id="GO:0005737">
    <property type="term" value="C:cytoplasm"/>
    <property type="evidence" value="ECO:0007669"/>
    <property type="project" value="UniProtKB-SubCell"/>
</dbReference>
<dbReference type="GO" id="GO:0004315">
    <property type="term" value="F:3-oxoacyl-[acyl-carrier-protein] synthase activity"/>
    <property type="evidence" value="ECO:0007669"/>
    <property type="project" value="InterPro"/>
</dbReference>
<dbReference type="GO" id="GO:0033818">
    <property type="term" value="F:beta-ketoacyl-acyl-carrier-protein synthase III activity"/>
    <property type="evidence" value="ECO:0007669"/>
    <property type="project" value="UniProtKB-EC"/>
</dbReference>
<dbReference type="GO" id="GO:0006633">
    <property type="term" value="P:fatty acid biosynthetic process"/>
    <property type="evidence" value="ECO:0007669"/>
    <property type="project" value="UniProtKB-UniPathway"/>
</dbReference>
<dbReference type="CDD" id="cd00830">
    <property type="entry name" value="KAS_III"/>
    <property type="match status" value="1"/>
</dbReference>
<dbReference type="Gene3D" id="3.40.47.10">
    <property type="match status" value="2"/>
</dbReference>
<dbReference type="InterPro" id="IPR013747">
    <property type="entry name" value="ACP_syn_III_C"/>
</dbReference>
<dbReference type="InterPro" id="IPR013751">
    <property type="entry name" value="ACP_syn_III_N"/>
</dbReference>
<dbReference type="InterPro" id="IPR016039">
    <property type="entry name" value="Thiolase-like"/>
</dbReference>
<dbReference type="NCBIfam" id="NF006829">
    <property type="entry name" value="PRK09352.1"/>
    <property type="match status" value="1"/>
</dbReference>
<dbReference type="PANTHER" id="PTHR43091">
    <property type="entry name" value="3-OXOACYL-[ACYL-CARRIER-PROTEIN] SYNTHASE"/>
    <property type="match status" value="1"/>
</dbReference>
<dbReference type="PANTHER" id="PTHR43091:SF1">
    <property type="entry name" value="BETA-KETOACYL-[ACYL-CARRIER-PROTEIN] SYNTHASE III, CHLOROPLASTIC"/>
    <property type="match status" value="1"/>
</dbReference>
<dbReference type="Pfam" id="PF08545">
    <property type="entry name" value="ACP_syn_III"/>
    <property type="match status" value="1"/>
</dbReference>
<dbReference type="Pfam" id="PF08541">
    <property type="entry name" value="ACP_syn_III_C"/>
    <property type="match status" value="1"/>
</dbReference>
<dbReference type="SUPFAM" id="SSF53901">
    <property type="entry name" value="Thiolase-like"/>
    <property type="match status" value="1"/>
</dbReference>
<accession>P64117</accession>
<accession>Q83HL5</accession>
<accession>Q83N01</accession>
<evidence type="ECO:0000250" key="1"/>
<evidence type="ECO:0000305" key="2"/>
<keyword id="KW-0012">Acyltransferase</keyword>
<keyword id="KW-0963">Cytoplasm</keyword>
<keyword id="KW-0275">Fatty acid biosynthesis</keyword>
<keyword id="KW-0276">Fatty acid metabolism</keyword>
<keyword id="KW-0444">Lipid biosynthesis</keyword>
<keyword id="KW-0443">Lipid metabolism</keyword>
<keyword id="KW-0511">Multifunctional enzyme</keyword>
<keyword id="KW-0808">Transferase</keyword>
<feature type="chain" id="PRO_0000110501" description="Beta-ketoacyl-[acyl-carrier-protein] synthase III">
    <location>
        <begin position="1"/>
        <end position="322"/>
    </location>
</feature>
<feature type="region of interest" description="ACP-binding" evidence="1">
    <location>
        <begin position="248"/>
        <end position="252"/>
    </location>
</feature>
<feature type="active site" evidence="1">
    <location>
        <position position="113"/>
    </location>
</feature>
<feature type="active site" evidence="1">
    <location>
        <position position="247"/>
    </location>
</feature>
<feature type="active site" evidence="1">
    <location>
        <position position="278"/>
    </location>
</feature>
<protein>
    <recommendedName>
        <fullName evidence="1">Beta-ketoacyl-[acyl-carrier-protein] synthase III</fullName>
        <shortName evidence="1">Beta-ketoacyl-ACP synthase III</shortName>
        <shortName evidence="1">KAS III</shortName>
        <ecNumber evidence="1">2.3.1.180</ecNumber>
    </recommendedName>
    <alternativeName>
        <fullName evidence="1">3-oxoacyl-[acyl-carrier-protein] synthase 3</fullName>
    </alternativeName>
    <alternativeName>
        <fullName evidence="1">3-oxoacyl-[acyl-carrier-protein] synthase III</fullName>
    </alternativeName>
</protein>
<sequence>MRYSKIVSLGAYRGERDVYNDELIGPINSSDEWIRRRTGIISRKRALSGTTVVDMAYAASKEALNDAQMRPEDIDLILVATITHFGHTPSVAAHVGFRIGVQDAILLDINAACAGFSYAIFQADLMIKSGVASRALVIGVDKLSEFIDPLDRTISFLLADGAGAAILVGSTSMGIGKTVCGGNPGQLESVGLTGSTTDVKSGSAWPTLRQEGSSIFRWAVWQMAKVAKQILDINQVQPGDLNAFIPHQANIRIIDELAKQIGLEENVLIAQDICKTGNTSSASIPLAMHSLIKGNPSLSGELALQIGFGAGLVYAGQTVVMP</sequence>
<comment type="function">
    <text evidence="1">Catalyzes the condensation reaction of fatty acid synthesis by the addition to an acyl acceptor of two carbons from malonyl-ACP. Catalyzes the first condensation reaction which initiates fatty acid synthesis and may therefore play a role in governing the total rate of fatty acid production. Possesses both acetoacetyl-ACP synthase and acetyl transacylase activities. Its substrate specificity determines the biosynthesis of branched-chain and/or straight-chain of fatty acids.</text>
</comment>
<comment type="catalytic activity">
    <reaction evidence="1">
        <text>malonyl-[ACP] + acetyl-CoA + H(+) = 3-oxobutanoyl-[ACP] + CO2 + CoA</text>
        <dbReference type="Rhea" id="RHEA:12080"/>
        <dbReference type="Rhea" id="RHEA-COMP:9623"/>
        <dbReference type="Rhea" id="RHEA-COMP:9625"/>
        <dbReference type="ChEBI" id="CHEBI:15378"/>
        <dbReference type="ChEBI" id="CHEBI:16526"/>
        <dbReference type="ChEBI" id="CHEBI:57287"/>
        <dbReference type="ChEBI" id="CHEBI:57288"/>
        <dbReference type="ChEBI" id="CHEBI:78449"/>
        <dbReference type="ChEBI" id="CHEBI:78450"/>
        <dbReference type="EC" id="2.3.1.180"/>
    </reaction>
</comment>
<comment type="pathway">
    <text evidence="1">Lipid metabolism; fatty acid biosynthesis.</text>
</comment>
<comment type="subunit">
    <text evidence="1">Homodimer.</text>
</comment>
<comment type="subcellular location">
    <subcellularLocation>
        <location evidence="1">Cytoplasm</location>
    </subcellularLocation>
</comment>
<comment type="domain">
    <text evidence="1">The last Arg residue of the ACP-binding site is essential for the weak association between ACP/AcpP and FabH.</text>
</comment>
<comment type="similarity">
    <text evidence="2">Belongs to the thiolase-like superfamily. FabH family.</text>
</comment>
<reference key="1">
    <citation type="journal article" date="2003" name="Lancet">
        <title>Sequencing and analysis of the genome of the Whipple's disease bacterium Tropheryma whipplei.</title>
        <authorList>
            <person name="Bentley S.D."/>
            <person name="Maiwald M."/>
            <person name="Murphy L.D."/>
            <person name="Pallen M.J."/>
            <person name="Yeats C.A."/>
            <person name="Dover L.G."/>
            <person name="Norbertczak H.T."/>
            <person name="Besra G.S."/>
            <person name="Quail M.A."/>
            <person name="Harris D.E."/>
            <person name="von Herbay A."/>
            <person name="Goble A."/>
            <person name="Rutter S."/>
            <person name="Squares R."/>
            <person name="Squares S."/>
            <person name="Barrell B.G."/>
            <person name="Parkhill J."/>
            <person name="Relman D.A."/>
        </authorList>
    </citation>
    <scope>NUCLEOTIDE SEQUENCE [LARGE SCALE GENOMIC DNA]</scope>
    <source>
        <strain>TW08/27</strain>
    </source>
</reference>
<proteinExistence type="inferred from homology"/>
<gene>
    <name evidence="1" type="primary">fabH</name>
    <name type="ordered locus">TW517</name>
</gene>